<feature type="chain" id="PRO_0000181221" description="Large ribosomal subunit protein bL27c">
    <location>
        <begin position="1"/>
        <end position="87"/>
    </location>
</feature>
<feature type="region of interest" description="Disordered" evidence="2">
    <location>
        <begin position="1"/>
        <end position="20"/>
    </location>
</feature>
<organism>
    <name type="scientific">Gracilaria tenuistipitata var. liui</name>
    <name type="common">Red alga</name>
    <dbReference type="NCBI Taxonomy" id="285951"/>
    <lineage>
        <taxon>Eukaryota</taxon>
        <taxon>Rhodophyta</taxon>
        <taxon>Florideophyceae</taxon>
        <taxon>Rhodymeniophycidae</taxon>
        <taxon>Gracilariales</taxon>
        <taxon>Gracilariaceae</taxon>
        <taxon>Gracilaria</taxon>
        <taxon>Gracilaria tenuistipitata</taxon>
    </lineage>
</organism>
<dbReference type="EMBL" id="AY673996">
    <property type="protein sequence ID" value="AAT79604.1"/>
    <property type="molecule type" value="Genomic_DNA"/>
</dbReference>
<dbReference type="RefSeq" id="YP_063529.1">
    <property type="nucleotide sequence ID" value="NC_006137.1"/>
</dbReference>
<dbReference type="SMR" id="Q6B931"/>
<dbReference type="GeneID" id="2944068"/>
<dbReference type="GO" id="GO:0009507">
    <property type="term" value="C:chloroplast"/>
    <property type="evidence" value="ECO:0007669"/>
    <property type="project" value="UniProtKB-SubCell"/>
</dbReference>
<dbReference type="GO" id="GO:1990904">
    <property type="term" value="C:ribonucleoprotein complex"/>
    <property type="evidence" value="ECO:0007669"/>
    <property type="project" value="UniProtKB-KW"/>
</dbReference>
<dbReference type="GO" id="GO:0005840">
    <property type="term" value="C:ribosome"/>
    <property type="evidence" value="ECO:0007669"/>
    <property type="project" value="UniProtKB-KW"/>
</dbReference>
<dbReference type="GO" id="GO:0003735">
    <property type="term" value="F:structural constituent of ribosome"/>
    <property type="evidence" value="ECO:0007669"/>
    <property type="project" value="InterPro"/>
</dbReference>
<dbReference type="GO" id="GO:0006412">
    <property type="term" value="P:translation"/>
    <property type="evidence" value="ECO:0007669"/>
    <property type="project" value="UniProtKB-UniRule"/>
</dbReference>
<dbReference type="FunFam" id="2.40.50.100:FF:000020">
    <property type="entry name" value="50S ribosomal protein L27"/>
    <property type="match status" value="1"/>
</dbReference>
<dbReference type="Gene3D" id="2.40.50.100">
    <property type="match status" value="1"/>
</dbReference>
<dbReference type="HAMAP" id="MF_00539">
    <property type="entry name" value="Ribosomal_bL27"/>
    <property type="match status" value="1"/>
</dbReference>
<dbReference type="InterPro" id="IPR001684">
    <property type="entry name" value="Ribosomal_bL27"/>
</dbReference>
<dbReference type="InterPro" id="IPR018261">
    <property type="entry name" value="Ribosomal_bL27_CS"/>
</dbReference>
<dbReference type="NCBIfam" id="TIGR00062">
    <property type="entry name" value="L27"/>
    <property type="match status" value="1"/>
</dbReference>
<dbReference type="PANTHER" id="PTHR15893:SF0">
    <property type="entry name" value="LARGE RIBOSOMAL SUBUNIT PROTEIN BL27M"/>
    <property type="match status" value="1"/>
</dbReference>
<dbReference type="PANTHER" id="PTHR15893">
    <property type="entry name" value="RIBOSOMAL PROTEIN L27"/>
    <property type="match status" value="1"/>
</dbReference>
<dbReference type="Pfam" id="PF01016">
    <property type="entry name" value="Ribosomal_L27"/>
    <property type="match status" value="1"/>
</dbReference>
<dbReference type="PRINTS" id="PR00063">
    <property type="entry name" value="RIBOSOMALL27"/>
</dbReference>
<dbReference type="SUPFAM" id="SSF110324">
    <property type="entry name" value="Ribosomal L27 protein-like"/>
    <property type="match status" value="1"/>
</dbReference>
<dbReference type="PROSITE" id="PS00831">
    <property type="entry name" value="RIBOSOMAL_L27"/>
    <property type="match status" value="1"/>
</dbReference>
<evidence type="ECO:0000255" key="1">
    <source>
        <dbReference type="HAMAP-Rule" id="MF_00539"/>
    </source>
</evidence>
<evidence type="ECO:0000256" key="2">
    <source>
        <dbReference type="SAM" id="MobiDB-lite"/>
    </source>
</evidence>
<evidence type="ECO:0000305" key="3"/>
<accession>Q6B931</accession>
<proteinExistence type="inferred from homology"/>
<keyword id="KW-0150">Chloroplast</keyword>
<keyword id="KW-0934">Plastid</keyword>
<keyword id="KW-0687">Ribonucleoprotein</keyword>
<keyword id="KW-0689">Ribosomal protein</keyword>
<sequence length="87" mass="9588">MAHKKGSGSTKNGRDSRSQRLGIKKYGGESVIIGNIIIRQRGSQFKPGVNVKLGKDDTLFALANGKVIFKKKKKKHTIVNVIENILQ</sequence>
<geneLocation type="chloroplast"/>
<comment type="subcellular location">
    <subcellularLocation>
        <location>Plastid</location>
        <location>Chloroplast</location>
    </subcellularLocation>
</comment>
<comment type="similarity">
    <text evidence="1">Belongs to the bacterial ribosomal protein bL27 family.</text>
</comment>
<reference key="1">
    <citation type="journal article" date="2004" name="J. Mol. Evol.">
        <title>Comparative analysis of the complete plastid genome sequence of the red alga Gracilaria tenuistipitata var. liui provides insights into the evolution of rhodoplasts and their relationship to other plastids.</title>
        <authorList>
            <person name="Hagopian J.C."/>
            <person name="Reis M."/>
            <person name="Kitajima J.P."/>
            <person name="Bhattacharya D."/>
            <person name="de Oliveira M.C."/>
        </authorList>
    </citation>
    <scope>NUCLEOTIDE SEQUENCE [LARGE SCALE GENOMIC DNA]</scope>
</reference>
<protein>
    <recommendedName>
        <fullName evidence="1">Large ribosomal subunit protein bL27c</fullName>
    </recommendedName>
    <alternativeName>
        <fullName evidence="3">50S ribosomal protein L27, chloroplastic</fullName>
    </alternativeName>
</protein>
<name>RK27_GRATL</name>
<gene>
    <name evidence="1" type="primary">rpl27</name>
    <name type="ordered locus">Grc000022</name>
</gene>